<evidence type="ECO:0000255" key="1"/>
<evidence type="ECO:0000305" key="2"/>
<name>YHHN_ECOL6</name>
<reference key="1">
    <citation type="journal article" date="2002" name="Proc. Natl. Acad. Sci. U.S.A.">
        <title>Extensive mosaic structure revealed by the complete genome sequence of uropathogenic Escherichia coli.</title>
        <authorList>
            <person name="Welch R.A."/>
            <person name="Burland V."/>
            <person name="Plunkett G. III"/>
            <person name="Redford P."/>
            <person name="Roesch P."/>
            <person name="Rasko D."/>
            <person name="Buckles E.L."/>
            <person name="Liou S.-R."/>
            <person name="Boutin A."/>
            <person name="Hackett J."/>
            <person name="Stroud D."/>
            <person name="Mayhew G.F."/>
            <person name="Rose D.J."/>
            <person name="Zhou S."/>
            <person name="Schwartz D.C."/>
            <person name="Perna N.T."/>
            <person name="Mobley H.L.T."/>
            <person name="Donnenberg M.S."/>
            <person name="Blattner F.R."/>
        </authorList>
    </citation>
    <scope>NUCLEOTIDE SEQUENCE [LARGE SCALE GENOMIC DNA]</scope>
    <source>
        <strain>CFT073 / ATCC 700928 / UPEC</strain>
    </source>
</reference>
<accession>P0ADJ0</accession>
<accession>P37616</accession>
<proteinExistence type="inferred from homology"/>
<comment type="subcellular location">
    <subcellularLocation>
        <location evidence="2">Cell membrane</location>
        <topology evidence="2">Multi-pass membrane protein</topology>
    </subcellularLocation>
</comment>
<comment type="similarity">
    <text evidence="2">Belongs to the TMEM86 family.</text>
</comment>
<gene>
    <name type="primary">yhhN</name>
    <name type="ordered locus">c4261</name>
</gene>
<protein>
    <recommendedName>
        <fullName>Uncharacterized membrane protein YhhN</fullName>
    </recommendedName>
</protein>
<feature type="chain" id="PRO_0000201845" description="Uncharacterized membrane protein YhhN">
    <location>
        <begin position="1"/>
        <end position="208"/>
    </location>
</feature>
<feature type="transmembrane region" description="Helical" evidence="1">
    <location>
        <begin position="35"/>
        <end position="55"/>
    </location>
</feature>
<feature type="transmembrane region" description="Helical" evidence="1">
    <location>
        <begin position="76"/>
        <end position="96"/>
    </location>
</feature>
<feature type="transmembrane region" description="Helical" evidence="1">
    <location>
        <begin position="102"/>
        <end position="122"/>
    </location>
</feature>
<feature type="transmembrane region" description="Helical" evidence="1">
    <location>
        <begin position="132"/>
        <end position="152"/>
    </location>
</feature>
<feature type="transmembrane region" description="Helical" evidence="1">
    <location>
        <begin position="156"/>
        <end position="176"/>
    </location>
</feature>
<feature type="transmembrane region" description="Helical" evidence="1">
    <location>
        <begin position="188"/>
        <end position="208"/>
    </location>
</feature>
<dbReference type="EMBL" id="AE014075">
    <property type="protein sequence ID" value="AAN82697.1"/>
    <property type="molecule type" value="Genomic_DNA"/>
</dbReference>
<dbReference type="RefSeq" id="WP_000964718.1">
    <property type="nucleotide sequence ID" value="NZ_CP051263.1"/>
</dbReference>
<dbReference type="STRING" id="199310.c4261"/>
<dbReference type="KEGG" id="ecc:c4261"/>
<dbReference type="eggNOG" id="COG3714">
    <property type="taxonomic scope" value="Bacteria"/>
</dbReference>
<dbReference type="HOGENOM" id="CLU_079086_6_1_6"/>
<dbReference type="BioCyc" id="ECOL199310:C4261-MONOMER"/>
<dbReference type="Proteomes" id="UP000001410">
    <property type="component" value="Chromosome"/>
</dbReference>
<dbReference type="GO" id="GO:0005886">
    <property type="term" value="C:plasma membrane"/>
    <property type="evidence" value="ECO:0007669"/>
    <property type="project" value="UniProtKB-SubCell"/>
</dbReference>
<dbReference type="GO" id="GO:0016787">
    <property type="term" value="F:hydrolase activity"/>
    <property type="evidence" value="ECO:0007669"/>
    <property type="project" value="TreeGrafter"/>
</dbReference>
<dbReference type="InterPro" id="IPR012506">
    <property type="entry name" value="TMEM86B-like"/>
</dbReference>
<dbReference type="PANTHER" id="PTHR31885">
    <property type="entry name" value="GH04784P"/>
    <property type="match status" value="1"/>
</dbReference>
<dbReference type="PANTHER" id="PTHR31885:SF6">
    <property type="entry name" value="GH04784P"/>
    <property type="match status" value="1"/>
</dbReference>
<dbReference type="Pfam" id="PF07947">
    <property type="entry name" value="YhhN"/>
    <property type="match status" value="1"/>
</dbReference>
<organism>
    <name type="scientific">Escherichia coli O6:H1 (strain CFT073 / ATCC 700928 / UPEC)</name>
    <dbReference type="NCBI Taxonomy" id="199310"/>
    <lineage>
        <taxon>Bacteria</taxon>
        <taxon>Pseudomonadati</taxon>
        <taxon>Pseudomonadota</taxon>
        <taxon>Gammaproteobacteria</taxon>
        <taxon>Enterobacterales</taxon>
        <taxon>Enterobacteriaceae</taxon>
        <taxon>Escherichia</taxon>
    </lineage>
</organism>
<keyword id="KW-1003">Cell membrane</keyword>
<keyword id="KW-0472">Membrane</keyword>
<keyword id="KW-1185">Reference proteome</keyword>
<keyword id="KW-0812">Transmembrane</keyword>
<keyword id="KW-1133">Transmembrane helix</keyword>
<sequence length="208" mass="23791">MLWSFIAVCLSAWLSVDASYRGPTWQRWVFKPLTLLLLLLLAWQAPMFDAISYLVLAGLCASLLGDALTLLPRQRLMYAIGAFFLSHLLYTIYFASQMTLSFFWPLPLVLLVLGALLLAIIWTRLEEYRWPICTFIGMTLVMVWLAGELWFFRPTAPALSAFVGASLLFISNFVWLGSHYRRRFRADNAIAAACYFAGHFLIVRSLYL</sequence>